<feature type="chain" id="PRO_0000374861" description="Ribosomal protein uS12 methylthiotransferase RimO">
    <location>
        <begin position="1"/>
        <end position="439"/>
    </location>
</feature>
<feature type="domain" description="MTTase N-terminal" evidence="1">
    <location>
        <begin position="7"/>
        <end position="119"/>
    </location>
</feature>
<feature type="domain" description="Radical SAM core" evidence="2">
    <location>
        <begin position="137"/>
        <end position="368"/>
    </location>
</feature>
<feature type="binding site" evidence="1">
    <location>
        <position position="16"/>
    </location>
    <ligand>
        <name>[4Fe-4S] cluster</name>
        <dbReference type="ChEBI" id="CHEBI:49883"/>
        <label>1</label>
    </ligand>
</feature>
<feature type="binding site" evidence="1">
    <location>
        <position position="50"/>
    </location>
    <ligand>
        <name>[4Fe-4S] cluster</name>
        <dbReference type="ChEBI" id="CHEBI:49883"/>
        <label>1</label>
    </ligand>
</feature>
<feature type="binding site" evidence="1">
    <location>
        <position position="82"/>
    </location>
    <ligand>
        <name>[4Fe-4S] cluster</name>
        <dbReference type="ChEBI" id="CHEBI:49883"/>
        <label>1</label>
    </ligand>
</feature>
<feature type="binding site" evidence="1">
    <location>
        <position position="151"/>
    </location>
    <ligand>
        <name>[4Fe-4S] cluster</name>
        <dbReference type="ChEBI" id="CHEBI:49883"/>
        <label>2</label>
        <note>4Fe-4S-S-AdoMet</note>
    </ligand>
</feature>
<feature type="binding site" evidence="1">
    <location>
        <position position="155"/>
    </location>
    <ligand>
        <name>[4Fe-4S] cluster</name>
        <dbReference type="ChEBI" id="CHEBI:49883"/>
        <label>2</label>
        <note>4Fe-4S-S-AdoMet</note>
    </ligand>
</feature>
<feature type="binding site" evidence="1">
    <location>
        <position position="158"/>
    </location>
    <ligand>
        <name>[4Fe-4S] cluster</name>
        <dbReference type="ChEBI" id="CHEBI:49883"/>
        <label>2</label>
        <note>4Fe-4S-S-AdoMet</note>
    </ligand>
</feature>
<proteinExistence type="inferred from homology"/>
<protein>
    <recommendedName>
        <fullName evidence="1">Ribosomal protein uS12 methylthiotransferase RimO</fullName>
        <shortName evidence="1">uS12 MTTase</shortName>
        <shortName evidence="1">uS12 methylthiotransferase</shortName>
        <ecNumber evidence="1">2.8.4.4</ecNumber>
    </recommendedName>
    <alternativeName>
        <fullName evidence="1">Ribosomal protein uS12 (aspartate-C(3))-methylthiotransferase</fullName>
    </alternativeName>
    <alternativeName>
        <fullName evidence="1">Ribosome maturation factor RimO</fullName>
    </alternativeName>
</protein>
<dbReference type="EC" id="2.8.4.4" evidence="1"/>
<dbReference type="EMBL" id="AE001439">
    <property type="protein sequence ID" value="AAD06255.1"/>
    <property type="molecule type" value="Genomic_DNA"/>
</dbReference>
<dbReference type="PIR" id="E71902">
    <property type="entry name" value="E71902"/>
</dbReference>
<dbReference type="RefSeq" id="WP_001197307.1">
    <property type="nucleotide sequence ID" value="NC_000921.1"/>
</dbReference>
<dbReference type="SMR" id="Q9ZLA9"/>
<dbReference type="KEGG" id="hpj:jhp_0671"/>
<dbReference type="PATRIC" id="fig|85963.30.peg.309"/>
<dbReference type="eggNOG" id="COG0621">
    <property type="taxonomic scope" value="Bacteria"/>
</dbReference>
<dbReference type="Proteomes" id="UP000000804">
    <property type="component" value="Chromosome"/>
</dbReference>
<dbReference type="GO" id="GO:0005829">
    <property type="term" value="C:cytosol"/>
    <property type="evidence" value="ECO:0007669"/>
    <property type="project" value="TreeGrafter"/>
</dbReference>
<dbReference type="GO" id="GO:0051539">
    <property type="term" value="F:4 iron, 4 sulfur cluster binding"/>
    <property type="evidence" value="ECO:0007669"/>
    <property type="project" value="UniProtKB-UniRule"/>
</dbReference>
<dbReference type="GO" id="GO:0035599">
    <property type="term" value="F:aspartic acid methylthiotransferase activity"/>
    <property type="evidence" value="ECO:0007669"/>
    <property type="project" value="TreeGrafter"/>
</dbReference>
<dbReference type="GO" id="GO:0046872">
    <property type="term" value="F:metal ion binding"/>
    <property type="evidence" value="ECO:0007669"/>
    <property type="project" value="UniProtKB-KW"/>
</dbReference>
<dbReference type="GO" id="GO:0103039">
    <property type="term" value="F:protein methylthiotransferase activity"/>
    <property type="evidence" value="ECO:0007669"/>
    <property type="project" value="UniProtKB-EC"/>
</dbReference>
<dbReference type="GO" id="GO:0006400">
    <property type="term" value="P:tRNA modification"/>
    <property type="evidence" value="ECO:0007669"/>
    <property type="project" value="InterPro"/>
</dbReference>
<dbReference type="CDD" id="cd01335">
    <property type="entry name" value="Radical_SAM"/>
    <property type="match status" value="1"/>
</dbReference>
<dbReference type="FunFam" id="3.40.50.12160:FF:000010">
    <property type="entry name" value="Ribosomal protein S12 methylthiotransferase RimO"/>
    <property type="match status" value="1"/>
</dbReference>
<dbReference type="FunFam" id="3.80.30.20:FF:000015">
    <property type="entry name" value="Ribosomal protein S12 methylthiotransferase RimO"/>
    <property type="match status" value="1"/>
</dbReference>
<dbReference type="Gene3D" id="3.40.50.12160">
    <property type="entry name" value="Methylthiotransferase, N-terminal domain"/>
    <property type="match status" value="1"/>
</dbReference>
<dbReference type="Gene3D" id="3.80.30.20">
    <property type="entry name" value="tm_1862 like domain"/>
    <property type="match status" value="1"/>
</dbReference>
<dbReference type="HAMAP" id="MF_01865">
    <property type="entry name" value="MTTase_RimO"/>
    <property type="match status" value="1"/>
</dbReference>
<dbReference type="InterPro" id="IPR006638">
    <property type="entry name" value="Elp3/MiaA/NifB-like_rSAM"/>
</dbReference>
<dbReference type="InterPro" id="IPR005839">
    <property type="entry name" value="Methylthiotransferase"/>
</dbReference>
<dbReference type="InterPro" id="IPR020612">
    <property type="entry name" value="Methylthiotransferase_CS"/>
</dbReference>
<dbReference type="InterPro" id="IPR013848">
    <property type="entry name" value="Methylthiotransferase_N"/>
</dbReference>
<dbReference type="InterPro" id="IPR038135">
    <property type="entry name" value="Methylthiotransferase_N_sf"/>
</dbReference>
<dbReference type="InterPro" id="IPR005840">
    <property type="entry name" value="Ribosomal_uS12_MeSTrfase_RimO"/>
</dbReference>
<dbReference type="InterPro" id="IPR007197">
    <property type="entry name" value="rSAM"/>
</dbReference>
<dbReference type="InterPro" id="IPR023404">
    <property type="entry name" value="rSAM_horseshoe"/>
</dbReference>
<dbReference type="NCBIfam" id="TIGR01125">
    <property type="entry name" value="30S ribosomal protein S12 methylthiotransferase RimO"/>
    <property type="match status" value="1"/>
</dbReference>
<dbReference type="NCBIfam" id="TIGR00089">
    <property type="entry name" value="MiaB/RimO family radical SAM methylthiotransferase"/>
    <property type="match status" value="1"/>
</dbReference>
<dbReference type="PANTHER" id="PTHR43837">
    <property type="entry name" value="RIBOSOMAL PROTEIN S12 METHYLTHIOTRANSFERASE RIMO"/>
    <property type="match status" value="1"/>
</dbReference>
<dbReference type="PANTHER" id="PTHR43837:SF1">
    <property type="entry name" value="RIBOSOMAL PROTEIN US12 METHYLTHIOTRANSFERASE RIMO"/>
    <property type="match status" value="1"/>
</dbReference>
<dbReference type="Pfam" id="PF04055">
    <property type="entry name" value="Radical_SAM"/>
    <property type="match status" value="1"/>
</dbReference>
<dbReference type="Pfam" id="PF00919">
    <property type="entry name" value="UPF0004"/>
    <property type="match status" value="1"/>
</dbReference>
<dbReference type="SFLD" id="SFLDG01082">
    <property type="entry name" value="B12-binding_domain_containing"/>
    <property type="match status" value="1"/>
</dbReference>
<dbReference type="SFLD" id="SFLDG01061">
    <property type="entry name" value="methylthiotransferase"/>
    <property type="match status" value="1"/>
</dbReference>
<dbReference type="SFLD" id="SFLDF00274">
    <property type="entry name" value="ribosomal_protein_S12_methylth"/>
    <property type="match status" value="1"/>
</dbReference>
<dbReference type="SMART" id="SM00729">
    <property type="entry name" value="Elp3"/>
    <property type="match status" value="1"/>
</dbReference>
<dbReference type="SUPFAM" id="SSF102114">
    <property type="entry name" value="Radical SAM enzymes"/>
    <property type="match status" value="1"/>
</dbReference>
<dbReference type="PROSITE" id="PS51449">
    <property type="entry name" value="MTTASE_N"/>
    <property type="match status" value="1"/>
</dbReference>
<dbReference type="PROSITE" id="PS01278">
    <property type="entry name" value="MTTASE_RADICAL"/>
    <property type="match status" value="1"/>
</dbReference>
<dbReference type="PROSITE" id="PS51918">
    <property type="entry name" value="RADICAL_SAM"/>
    <property type="match status" value="1"/>
</dbReference>
<reference key="1">
    <citation type="journal article" date="1999" name="Nature">
        <title>Genomic sequence comparison of two unrelated isolates of the human gastric pathogen Helicobacter pylori.</title>
        <authorList>
            <person name="Alm R.A."/>
            <person name="Ling L.-S.L."/>
            <person name="Moir D.T."/>
            <person name="King B.L."/>
            <person name="Brown E.D."/>
            <person name="Doig P.C."/>
            <person name="Smith D.R."/>
            <person name="Noonan B."/>
            <person name="Guild B.C."/>
            <person name="deJonge B.L."/>
            <person name="Carmel G."/>
            <person name="Tummino P.J."/>
            <person name="Caruso A."/>
            <person name="Uria-Nickelsen M."/>
            <person name="Mills D.M."/>
            <person name="Ives C."/>
            <person name="Gibson R."/>
            <person name="Merberg D."/>
            <person name="Mills S.D."/>
            <person name="Jiang Q."/>
            <person name="Taylor D.E."/>
            <person name="Vovis G.F."/>
            <person name="Trust T.J."/>
        </authorList>
    </citation>
    <scope>NUCLEOTIDE SEQUENCE [LARGE SCALE GENOMIC DNA]</scope>
    <source>
        <strain>J99 / ATCC 700824</strain>
    </source>
</reference>
<accession>Q9ZLA9</accession>
<name>RIMO_HELPJ</name>
<keyword id="KW-0004">4Fe-4S</keyword>
<keyword id="KW-0963">Cytoplasm</keyword>
<keyword id="KW-0408">Iron</keyword>
<keyword id="KW-0411">Iron-sulfur</keyword>
<keyword id="KW-0479">Metal-binding</keyword>
<keyword id="KW-0949">S-adenosyl-L-methionine</keyword>
<keyword id="KW-0808">Transferase</keyword>
<sequence>MQVKENKQLCLISLGCSKNLVDSEVMLGKLYNYTLTNDAKKADVILINTCGFIESAKQESIQTILNAAKDKKEGAILIASGCLSERYKDEIKELIPEVDIFTGVGDYDKIDILIAKKQNQFSEQVFLSEHYNARIITGSSVHAYVKISEGCNQKCSFCAIPSFKGKLQSRELDSILKEVEDLALKGYKDMTFIAQDSSSFLYDKGQKDGLIQLIRAIDKQQALKSARILYLYPSSTTLELIGAIEDSPIFQNYFDMPIQHISDSMLKKMRRNSSQAHHLKLLNAMKQVKESFIRSTIIVGHPEENESEFEELSAFLDEFRFDRLNIFAFSAEENTHAYSLEKVPKKIINARIKALNKIALKHQNHSFKALLNKPIKALVEHKEGEYFYKARDLRWAPEVDGEILINDSELTTPLKPGHYTIVPSAFKDNILLAKVLSPF</sequence>
<gene>
    <name evidence="1" type="primary">rimO</name>
    <name type="ordered locus">jhp_0671</name>
</gene>
<evidence type="ECO:0000255" key="1">
    <source>
        <dbReference type="HAMAP-Rule" id="MF_01865"/>
    </source>
</evidence>
<evidence type="ECO:0000255" key="2">
    <source>
        <dbReference type="PROSITE-ProRule" id="PRU01266"/>
    </source>
</evidence>
<organism>
    <name type="scientific">Helicobacter pylori (strain J99 / ATCC 700824)</name>
    <name type="common">Campylobacter pylori J99</name>
    <dbReference type="NCBI Taxonomy" id="85963"/>
    <lineage>
        <taxon>Bacteria</taxon>
        <taxon>Pseudomonadati</taxon>
        <taxon>Campylobacterota</taxon>
        <taxon>Epsilonproteobacteria</taxon>
        <taxon>Campylobacterales</taxon>
        <taxon>Helicobacteraceae</taxon>
        <taxon>Helicobacter</taxon>
    </lineage>
</organism>
<comment type="function">
    <text evidence="1">Catalyzes the methylthiolation of an aspartic acid residue of ribosomal protein uS12.</text>
</comment>
<comment type="catalytic activity">
    <reaction evidence="1">
        <text>L-aspartate(89)-[ribosomal protein uS12]-hydrogen + (sulfur carrier)-SH + AH2 + 2 S-adenosyl-L-methionine = 3-methylsulfanyl-L-aspartate(89)-[ribosomal protein uS12]-hydrogen + (sulfur carrier)-H + 5'-deoxyadenosine + L-methionine + A + S-adenosyl-L-homocysteine + 2 H(+)</text>
        <dbReference type="Rhea" id="RHEA:37087"/>
        <dbReference type="Rhea" id="RHEA-COMP:10460"/>
        <dbReference type="Rhea" id="RHEA-COMP:10461"/>
        <dbReference type="Rhea" id="RHEA-COMP:14737"/>
        <dbReference type="Rhea" id="RHEA-COMP:14739"/>
        <dbReference type="ChEBI" id="CHEBI:13193"/>
        <dbReference type="ChEBI" id="CHEBI:15378"/>
        <dbReference type="ChEBI" id="CHEBI:17319"/>
        <dbReference type="ChEBI" id="CHEBI:17499"/>
        <dbReference type="ChEBI" id="CHEBI:29917"/>
        <dbReference type="ChEBI" id="CHEBI:29961"/>
        <dbReference type="ChEBI" id="CHEBI:57844"/>
        <dbReference type="ChEBI" id="CHEBI:57856"/>
        <dbReference type="ChEBI" id="CHEBI:59789"/>
        <dbReference type="ChEBI" id="CHEBI:64428"/>
        <dbReference type="ChEBI" id="CHEBI:73599"/>
        <dbReference type="EC" id="2.8.4.4"/>
    </reaction>
</comment>
<comment type="cofactor">
    <cofactor evidence="1">
        <name>[4Fe-4S] cluster</name>
        <dbReference type="ChEBI" id="CHEBI:49883"/>
    </cofactor>
    <text evidence="1">Binds 2 [4Fe-4S] clusters. One cluster is coordinated with 3 cysteines and an exchangeable S-adenosyl-L-methionine.</text>
</comment>
<comment type="subcellular location">
    <subcellularLocation>
        <location evidence="1">Cytoplasm</location>
    </subcellularLocation>
</comment>
<comment type="similarity">
    <text evidence="1">Belongs to the methylthiotransferase family. RimO subfamily.</text>
</comment>